<protein>
    <recommendedName>
        <fullName evidence="1">Probable disulfide formation protein</fullName>
    </recommendedName>
    <alternativeName>
        <fullName evidence="1">Disulfide oxidoreductase</fullName>
    </alternativeName>
    <alternativeName>
        <fullName evidence="1">Thiol-disulfide oxidoreductase</fullName>
    </alternativeName>
</protein>
<name>BDBC_OCEIH</name>
<reference key="1">
    <citation type="journal article" date="2002" name="Nucleic Acids Res.">
        <title>Genome sequence of Oceanobacillus iheyensis isolated from the Iheya Ridge and its unexpected adaptive capabilities to extreme environments.</title>
        <authorList>
            <person name="Takami H."/>
            <person name="Takaki Y."/>
            <person name="Uchiyama I."/>
        </authorList>
    </citation>
    <scope>NUCLEOTIDE SEQUENCE [LARGE SCALE GENOMIC DNA]</scope>
    <source>
        <strain>DSM 14371 / CIP 107618 / JCM 11309 / KCTC 3954 / HTE831</strain>
    </source>
</reference>
<dbReference type="EMBL" id="BA000028">
    <property type="protein sequence ID" value="BAC13119.1"/>
    <property type="molecule type" value="Genomic_DNA"/>
</dbReference>
<dbReference type="RefSeq" id="WP_011065563.1">
    <property type="nucleotide sequence ID" value="NC_004193.1"/>
</dbReference>
<dbReference type="STRING" id="221109.gene:10733402"/>
<dbReference type="KEGG" id="oih:OB1163"/>
<dbReference type="eggNOG" id="COG1495">
    <property type="taxonomic scope" value="Bacteria"/>
</dbReference>
<dbReference type="HOGENOM" id="CLU_128688_0_0_9"/>
<dbReference type="OrthoDB" id="158402at2"/>
<dbReference type="PhylomeDB" id="Q8ERY3"/>
<dbReference type="Proteomes" id="UP000000822">
    <property type="component" value="Chromosome"/>
</dbReference>
<dbReference type="GO" id="GO:0005886">
    <property type="term" value="C:plasma membrane"/>
    <property type="evidence" value="ECO:0007669"/>
    <property type="project" value="UniProtKB-SubCell"/>
</dbReference>
<dbReference type="GO" id="GO:0015035">
    <property type="term" value="F:protein-disulfide reductase activity"/>
    <property type="evidence" value="ECO:0007669"/>
    <property type="project" value="UniProtKB-UniRule"/>
</dbReference>
<dbReference type="GO" id="GO:0006457">
    <property type="term" value="P:protein folding"/>
    <property type="evidence" value="ECO:0007669"/>
    <property type="project" value="InterPro"/>
</dbReference>
<dbReference type="Gene3D" id="1.20.1550.10">
    <property type="entry name" value="DsbB-like"/>
    <property type="match status" value="1"/>
</dbReference>
<dbReference type="HAMAP" id="MF_00287">
    <property type="entry name" value="BdbC"/>
    <property type="match status" value="1"/>
</dbReference>
<dbReference type="InterPro" id="IPR003752">
    <property type="entry name" value="DiS_bond_form_DsbB/BdbC"/>
</dbReference>
<dbReference type="InterPro" id="IPR012187">
    <property type="entry name" value="Disulphide_bond_form_BdbC"/>
</dbReference>
<dbReference type="InterPro" id="IPR023380">
    <property type="entry name" value="DsbB-like_sf"/>
</dbReference>
<dbReference type="NCBIfam" id="NF002849">
    <property type="entry name" value="PRK03113.1"/>
    <property type="match status" value="1"/>
</dbReference>
<dbReference type="PANTHER" id="PTHR43469">
    <property type="entry name" value="DISULFIDE FORMATION PROTEIN-RELATED"/>
    <property type="match status" value="1"/>
</dbReference>
<dbReference type="PANTHER" id="PTHR43469:SF1">
    <property type="entry name" value="SPBETA PROPHAGE-DERIVED DISULFIDE BOND FORMATION PROTEIN B"/>
    <property type="match status" value="1"/>
</dbReference>
<dbReference type="Pfam" id="PF02600">
    <property type="entry name" value="DsbB"/>
    <property type="match status" value="1"/>
</dbReference>
<dbReference type="PIRSF" id="PIRSF036659">
    <property type="entry name" value="BdbC"/>
    <property type="match status" value="1"/>
</dbReference>
<dbReference type="SUPFAM" id="SSF158442">
    <property type="entry name" value="DsbB-like"/>
    <property type="match status" value="1"/>
</dbReference>
<evidence type="ECO:0000255" key="1">
    <source>
        <dbReference type="HAMAP-Rule" id="MF_00287"/>
    </source>
</evidence>
<feature type="chain" id="PRO_0000059385" description="Probable disulfide formation protein">
    <location>
        <begin position="1"/>
        <end position="145"/>
    </location>
</feature>
<feature type="transmembrane region" description="Helical" evidence="1">
    <location>
        <begin position="9"/>
        <end position="28"/>
    </location>
</feature>
<feature type="transmembrane region" description="Helical" evidence="1">
    <location>
        <begin position="43"/>
        <end position="62"/>
    </location>
</feature>
<feature type="transmembrane region" description="Helical" evidence="1">
    <location>
        <begin position="69"/>
        <end position="86"/>
    </location>
</feature>
<feature type="transmembrane region" description="Helical" evidence="1">
    <location>
        <begin position="115"/>
        <end position="137"/>
    </location>
</feature>
<feature type="disulfide bond" description="Redox-active" evidence="1">
    <location>
        <begin position="38"/>
        <end position="41"/>
    </location>
</feature>
<feature type="disulfide bond" description="Redox-active" evidence="1">
    <location>
        <begin position="100"/>
        <end position="106"/>
    </location>
</feature>
<keyword id="KW-1003">Cell membrane</keyword>
<keyword id="KW-0143">Chaperone</keyword>
<keyword id="KW-1015">Disulfide bond</keyword>
<keyword id="KW-0249">Electron transport</keyword>
<keyword id="KW-0472">Membrane</keyword>
<keyword id="KW-0560">Oxidoreductase</keyword>
<keyword id="KW-0676">Redox-active center</keyword>
<keyword id="KW-1185">Reference proteome</keyword>
<keyword id="KW-0812">Transmembrane</keyword>
<keyword id="KW-1133">Transmembrane helix</keyword>
<keyword id="KW-0813">Transport</keyword>
<sequence length="145" mass="16264">MKKLTKKAENLLLLIWVQAFLALAGSLFYSEVMNYVPCELCWYQRILMYPLVLIYGVAAIKKDISFALPGLFMSGIGLLVSTYHYLVQHVSIFQEVGGACSGSVPCNVIYVNYFGFISIPFMAGVAFLIIFVLHLLILREQGRKA</sequence>
<proteinExistence type="inferred from homology"/>
<organism>
    <name type="scientific">Oceanobacillus iheyensis (strain DSM 14371 / CIP 107618 / JCM 11309 / KCTC 3954 / HTE831)</name>
    <dbReference type="NCBI Taxonomy" id="221109"/>
    <lineage>
        <taxon>Bacteria</taxon>
        <taxon>Bacillati</taxon>
        <taxon>Bacillota</taxon>
        <taxon>Bacilli</taxon>
        <taxon>Bacillales</taxon>
        <taxon>Bacillaceae</taxon>
        <taxon>Oceanobacillus</taxon>
    </lineage>
</organism>
<gene>
    <name evidence="1" type="primary">bdbC</name>
    <name type="ordered locus">OB1163</name>
</gene>
<accession>Q8ERY3</accession>
<comment type="function">
    <text evidence="1">Required for disulfide bond formation in some proteins.</text>
</comment>
<comment type="subcellular location">
    <subcellularLocation>
        <location evidence="1">Cell membrane</location>
        <topology evidence="1">Multi-pass membrane protein</topology>
    </subcellularLocation>
</comment>
<comment type="similarity">
    <text evidence="1">Belongs to the DsbB family. BdbC subfamily.</text>
</comment>